<keyword id="KW-0963">Cytoplasm</keyword>
<keyword id="KW-0448">Lipopolysaccharide biosynthesis</keyword>
<keyword id="KW-0548">Nucleotidyltransferase</keyword>
<keyword id="KW-1185">Reference proteome</keyword>
<keyword id="KW-0808">Transferase</keyword>
<name>KDSB_WIGBR</name>
<feature type="chain" id="PRO_0000370169" description="3-deoxy-manno-octulosonate cytidylyltransferase">
    <location>
        <begin position="1"/>
        <end position="243"/>
    </location>
</feature>
<dbReference type="EC" id="2.7.7.38" evidence="1"/>
<dbReference type="EMBL" id="BA000021">
    <property type="protein sequence ID" value="BAC24397.1"/>
    <property type="status" value="ALT_INIT"/>
    <property type="molecule type" value="Genomic_DNA"/>
</dbReference>
<dbReference type="SMR" id="Q8D2V1"/>
<dbReference type="STRING" id="36870.gene:10368744"/>
<dbReference type="KEGG" id="wbr:kdsB"/>
<dbReference type="eggNOG" id="COG1212">
    <property type="taxonomic scope" value="Bacteria"/>
</dbReference>
<dbReference type="HOGENOM" id="CLU_065038_1_0_6"/>
<dbReference type="OrthoDB" id="9815559at2"/>
<dbReference type="UniPathway" id="UPA00358">
    <property type="reaction ID" value="UER00476"/>
</dbReference>
<dbReference type="Proteomes" id="UP000000562">
    <property type="component" value="Chromosome"/>
</dbReference>
<dbReference type="GO" id="GO:0005829">
    <property type="term" value="C:cytosol"/>
    <property type="evidence" value="ECO:0007669"/>
    <property type="project" value="TreeGrafter"/>
</dbReference>
<dbReference type="GO" id="GO:0008690">
    <property type="term" value="F:3-deoxy-manno-octulosonate cytidylyltransferase activity"/>
    <property type="evidence" value="ECO:0007669"/>
    <property type="project" value="UniProtKB-UniRule"/>
</dbReference>
<dbReference type="GO" id="GO:0033468">
    <property type="term" value="P:CMP-keto-3-deoxy-D-manno-octulosonic acid biosynthetic process"/>
    <property type="evidence" value="ECO:0007669"/>
    <property type="project" value="UniProtKB-UniRule"/>
</dbReference>
<dbReference type="GO" id="GO:0009103">
    <property type="term" value="P:lipopolysaccharide biosynthetic process"/>
    <property type="evidence" value="ECO:0007669"/>
    <property type="project" value="UniProtKB-UniRule"/>
</dbReference>
<dbReference type="CDD" id="cd02517">
    <property type="entry name" value="CMP-KDO-Synthetase"/>
    <property type="match status" value="1"/>
</dbReference>
<dbReference type="FunFam" id="3.90.550.10:FF:000011">
    <property type="entry name" value="3-deoxy-manno-octulosonate cytidylyltransferase"/>
    <property type="match status" value="1"/>
</dbReference>
<dbReference type="Gene3D" id="3.90.550.10">
    <property type="entry name" value="Spore Coat Polysaccharide Biosynthesis Protein SpsA, Chain A"/>
    <property type="match status" value="1"/>
</dbReference>
<dbReference type="HAMAP" id="MF_00057">
    <property type="entry name" value="KdsB"/>
    <property type="match status" value="1"/>
</dbReference>
<dbReference type="InterPro" id="IPR003329">
    <property type="entry name" value="Cytidylyl_trans"/>
</dbReference>
<dbReference type="InterPro" id="IPR004528">
    <property type="entry name" value="KdsB"/>
</dbReference>
<dbReference type="InterPro" id="IPR029044">
    <property type="entry name" value="Nucleotide-diphossugar_trans"/>
</dbReference>
<dbReference type="NCBIfam" id="TIGR00466">
    <property type="entry name" value="kdsB"/>
    <property type="match status" value="1"/>
</dbReference>
<dbReference type="NCBIfam" id="NF003952">
    <property type="entry name" value="PRK05450.1-5"/>
    <property type="match status" value="1"/>
</dbReference>
<dbReference type="PANTHER" id="PTHR42866">
    <property type="entry name" value="3-DEOXY-MANNO-OCTULOSONATE CYTIDYLYLTRANSFERASE"/>
    <property type="match status" value="1"/>
</dbReference>
<dbReference type="PANTHER" id="PTHR42866:SF2">
    <property type="entry name" value="3-DEOXY-MANNO-OCTULOSONATE CYTIDYLYLTRANSFERASE, MITOCHONDRIAL"/>
    <property type="match status" value="1"/>
</dbReference>
<dbReference type="Pfam" id="PF02348">
    <property type="entry name" value="CTP_transf_3"/>
    <property type="match status" value="1"/>
</dbReference>
<dbReference type="SUPFAM" id="SSF53448">
    <property type="entry name" value="Nucleotide-diphospho-sugar transferases"/>
    <property type="match status" value="1"/>
</dbReference>
<sequence length="243" mass="28341">MEFIVIIPARFFSKRFPKKPLININGKPMIIHTIENAKKSGASRVIVVTDNNEIYSLVNKNGIEVLLTKKEYNSGTERLIEAIEKFKIKDNQIIVNLQVDEPFLNSDNIFNVAKKLKEKNLIVSTLAIPILNKKEIFDKNIVKVVIDINGYALYFSRSVIPWCENYNSYYIKNNFLKHVGIYAYYAKFVRLYSNYNSSKLEKMENLEQLRILWYGKRIYVSVENIKNCFSINTPSDMLNIKSF</sequence>
<accession>Q8D2V1</accession>
<gene>
    <name evidence="1" type="primary">kdsB</name>
    <name type="ordered locus">WIGBR2510</name>
</gene>
<comment type="function">
    <text evidence="1">Activates KDO (a required 8-carbon sugar) for incorporation into bacterial lipopolysaccharide in Gram-negative bacteria.</text>
</comment>
<comment type="catalytic activity">
    <reaction evidence="1">
        <text>3-deoxy-alpha-D-manno-oct-2-ulosonate + CTP = CMP-3-deoxy-beta-D-manno-octulosonate + diphosphate</text>
        <dbReference type="Rhea" id="RHEA:23448"/>
        <dbReference type="ChEBI" id="CHEBI:33019"/>
        <dbReference type="ChEBI" id="CHEBI:37563"/>
        <dbReference type="ChEBI" id="CHEBI:85986"/>
        <dbReference type="ChEBI" id="CHEBI:85987"/>
        <dbReference type="EC" id="2.7.7.38"/>
    </reaction>
</comment>
<comment type="pathway">
    <text evidence="1">Nucleotide-sugar biosynthesis; CMP-3-deoxy-D-manno-octulosonate biosynthesis; CMP-3-deoxy-D-manno-octulosonate from 3-deoxy-D-manno-octulosonate and CTP: step 1/1.</text>
</comment>
<comment type="subcellular location">
    <subcellularLocation>
        <location evidence="1">Cytoplasm</location>
    </subcellularLocation>
</comment>
<comment type="similarity">
    <text evidence="1">Belongs to the KdsB family.</text>
</comment>
<comment type="sequence caution" evidence="2">
    <conflict type="erroneous initiation">
        <sequence resource="EMBL-CDS" id="BAC24397"/>
    </conflict>
</comment>
<organism>
    <name type="scientific">Wigglesworthia glossinidia brevipalpis</name>
    <dbReference type="NCBI Taxonomy" id="36870"/>
    <lineage>
        <taxon>Bacteria</taxon>
        <taxon>Pseudomonadati</taxon>
        <taxon>Pseudomonadota</taxon>
        <taxon>Gammaproteobacteria</taxon>
        <taxon>Enterobacterales</taxon>
        <taxon>Erwiniaceae</taxon>
        <taxon>Wigglesworthia</taxon>
    </lineage>
</organism>
<protein>
    <recommendedName>
        <fullName evidence="1">3-deoxy-manno-octulosonate cytidylyltransferase</fullName>
        <ecNumber evidence="1">2.7.7.38</ecNumber>
    </recommendedName>
    <alternativeName>
        <fullName evidence="1">CMP-2-keto-3-deoxyoctulosonic acid synthase</fullName>
        <shortName evidence="1">CKS</shortName>
        <shortName evidence="1">CMP-KDO synthase</shortName>
    </alternativeName>
</protein>
<reference key="1">
    <citation type="journal article" date="2002" name="Nat. Genet.">
        <title>Genome sequence of the endocellular obligate symbiont of tsetse flies, Wigglesworthia glossinidia.</title>
        <authorList>
            <person name="Akman L."/>
            <person name="Yamashita A."/>
            <person name="Watanabe H."/>
            <person name="Oshima K."/>
            <person name="Shiba T."/>
            <person name="Hattori M."/>
            <person name="Aksoy S."/>
        </authorList>
    </citation>
    <scope>NUCLEOTIDE SEQUENCE [LARGE SCALE GENOMIC DNA]</scope>
</reference>
<evidence type="ECO:0000255" key="1">
    <source>
        <dbReference type="HAMAP-Rule" id="MF_00057"/>
    </source>
</evidence>
<evidence type="ECO:0000305" key="2"/>
<proteinExistence type="inferred from homology"/>